<sequence length="492" mass="55458">MKYKDLRDFIAMLEQQGKLKRIAHPVSPHLEMTEIADRVLRAEGPALLFENPVKPDGTRYGYPVLANLFGTPERVAMGMGADSVSKLREIGQTLAYLKEPEPPKGIKDAFSKLPLLKDIWSMAPNVVKNAPCQEIVWEGENVDLYKLPIQHCWPEDVAPLVTWGLTVTRGPHKKRQNLGIYRQQLIGKNKLIMRWLSHRGGALDYQEFRKLNPDTPYPVAVVLGCDPATILGAVTPVPDTLSEYQFAGLLRGSRTELVKCIGNDLQVPARAEIVLEGVIHPNETALEGPYGDHTGYYNEQDHFPVFTVERITMRENPIYHSTYTGKPPDEPAVLGVALNEVFVPLLQKQFPEITDFYLPPEGCSYRMAVVSMKKQYAGHAKRVMMGCWSFLRQFMYTKFIIVVDDDVNVRDWKEVIWAVTTRMDPVRDTVLVENTPIDYLDFASPVSGLGGKMGLDATNKWPGETDREWGRVIKKDPAVTAKIDGIWEELGL</sequence>
<gene>
    <name evidence="1" type="primary">ubiD</name>
    <name type="ordered locus">NMC1611</name>
</gene>
<protein>
    <recommendedName>
        <fullName evidence="1">3-octaprenyl-4-hydroxybenzoate carboxy-lyase</fullName>
        <ecNumber evidence="1">4.1.1.98</ecNumber>
    </recommendedName>
    <alternativeName>
        <fullName evidence="1">Polyprenyl p-hydroxybenzoate decarboxylase</fullName>
    </alternativeName>
</protein>
<reference key="1">
    <citation type="journal article" date="2007" name="PLoS Genet.">
        <title>Meningococcal genetic variation mechanisms viewed through comparative analysis of serogroup C strain FAM18.</title>
        <authorList>
            <person name="Bentley S.D."/>
            <person name="Vernikos G.S."/>
            <person name="Snyder L.A.S."/>
            <person name="Churcher C."/>
            <person name="Arrowsmith C."/>
            <person name="Chillingworth T."/>
            <person name="Cronin A."/>
            <person name="Davis P.H."/>
            <person name="Holroyd N.E."/>
            <person name="Jagels K."/>
            <person name="Maddison M."/>
            <person name="Moule S."/>
            <person name="Rabbinowitsch E."/>
            <person name="Sharp S."/>
            <person name="Unwin L."/>
            <person name="Whitehead S."/>
            <person name="Quail M.A."/>
            <person name="Achtman M."/>
            <person name="Barrell B.G."/>
            <person name="Saunders N.J."/>
            <person name="Parkhill J."/>
        </authorList>
    </citation>
    <scope>NUCLEOTIDE SEQUENCE [LARGE SCALE GENOMIC DNA]</scope>
    <source>
        <strain>ATCC 700532 / DSM 15464 / FAM18</strain>
    </source>
</reference>
<name>UBID_NEIMF</name>
<evidence type="ECO:0000255" key="1">
    <source>
        <dbReference type="HAMAP-Rule" id="MF_01636"/>
    </source>
</evidence>
<evidence type="ECO:0000305" key="2"/>
<organism>
    <name type="scientific">Neisseria meningitidis serogroup C / serotype 2a (strain ATCC 700532 / DSM 15464 / FAM18)</name>
    <dbReference type="NCBI Taxonomy" id="272831"/>
    <lineage>
        <taxon>Bacteria</taxon>
        <taxon>Pseudomonadati</taxon>
        <taxon>Pseudomonadota</taxon>
        <taxon>Betaproteobacteria</taxon>
        <taxon>Neisseriales</taxon>
        <taxon>Neisseriaceae</taxon>
        <taxon>Neisseria</taxon>
    </lineage>
</organism>
<feature type="chain" id="PRO_0000335867" description="3-octaprenyl-4-hydroxybenzoate carboxy-lyase">
    <location>
        <begin position="1"/>
        <end position="492"/>
    </location>
</feature>
<feature type="active site" description="Proton donor" evidence="1">
    <location>
        <position position="292"/>
    </location>
</feature>
<feature type="binding site" evidence="1">
    <location>
        <position position="177"/>
    </location>
    <ligand>
        <name>Mn(2+)</name>
        <dbReference type="ChEBI" id="CHEBI:29035"/>
    </ligand>
</feature>
<feature type="binding site" evidence="1">
    <location>
        <begin position="180"/>
        <end position="182"/>
    </location>
    <ligand>
        <name>prenylated FMN</name>
        <dbReference type="ChEBI" id="CHEBI:87746"/>
    </ligand>
</feature>
<feature type="binding site" evidence="1">
    <location>
        <begin position="194"/>
        <end position="196"/>
    </location>
    <ligand>
        <name>prenylated FMN</name>
        <dbReference type="ChEBI" id="CHEBI:87746"/>
    </ligand>
</feature>
<feature type="binding site" evidence="1">
    <location>
        <begin position="199"/>
        <end position="200"/>
    </location>
    <ligand>
        <name>prenylated FMN</name>
        <dbReference type="ChEBI" id="CHEBI:87746"/>
    </ligand>
</feature>
<feature type="binding site" evidence="1">
    <location>
        <position position="243"/>
    </location>
    <ligand>
        <name>Mn(2+)</name>
        <dbReference type="ChEBI" id="CHEBI:29035"/>
    </ligand>
</feature>
<comment type="function">
    <text evidence="1">Catalyzes the decarboxylation of 3-octaprenyl-4-hydroxy benzoate to 2-octaprenylphenol, an intermediate step in ubiquinone biosynthesis.</text>
</comment>
<comment type="catalytic activity">
    <reaction evidence="1">
        <text>a 4-hydroxy-3-(all-trans-polyprenyl)benzoate + H(+) = a 2-(all-trans-polyprenyl)phenol + CO2</text>
        <dbReference type="Rhea" id="RHEA:41680"/>
        <dbReference type="Rhea" id="RHEA-COMP:9514"/>
        <dbReference type="Rhea" id="RHEA-COMP:9516"/>
        <dbReference type="ChEBI" id="CHEBI:1269"/>
        <dbReference type="ChEBI" id="CHEBI:15378"/>
        <dbReference type="ChEBI" id="CHEBI:16526"/>
        <dbReference type="ChEBI" id="CHEBI:78396"/>
        <dbReference type="EC" id="4.1.1.98"/>
    </reaction>
</comment>
<comment type="cofactor">
    <cofactor evidence="1">
        <name>prenylated FMN</name>
        <dbReference type="ChEBI" id="CHEBI:87746"/>
    </cofactor>
    <text evidence="1">Binds 1 prenylated FMN per subunit.</text>
</comment>
<comment type="cofactor">
    <cofactor evidence="1">
        <name>Mn(2+)</name>
        <dbReference type="ChEBI" id="CHEBI:29035"/>
    </cofactor>
</comment>
<comment type="pathway">
    <text evidence="1">Cofactor biosynthesis; ubiquinone biosynthesis.</text>
</comment>
<comment type="subunit">
    <text evidence="1">Homohexamer.</text>
</comment>
<comment type="subcellular location">
    <subcellularLocation>
        <location evidence="1">Cell membrane</location>
        <topology evidence="1">Peripheral membrane protein</topology>
    </subcellularLocation>
</comment>
<comment type="similarity">
    <text evidence="1">Belongs to the UbiD family.</text>
</comment>
<comment type="sequence caution" evidence="2">
    <conflict type="erroneous initiation">
        <sequence resource="EMBL-CDS" id="CAM10803"/>
    </conflict>
</comment>
<accession>A1KVA2</accession>
<keyword id="KW-1003">Cell membrane</keyword>
<keyword id="KW-0210">Decarboxylase</keyword>
<keyword id="KW-0285">Flavoprotein</keyword>
<keyword id="KW-0288">FMN</keyword>
<keyword id="KW-0456">Lyase</keyword>
<keyword id="KW-0464">Manganese</keyword>
<keyword id="KW-0472">Membrane</keyword>
<keyword id="KW-0479">Metal-binding</keyword>
<keyword id="KW-0831">Ubiquinone biosynthesis</keyword>
<dbReference type="EC" id="4.1.1.98" evidence="1"/>
<dbReference type="EMBL" id="AM421808">
    <property type="protein sequence ID" value="CAM10803.1"/>
    <property type="status" value="ALT_INIT"/>
    <property type="molecule type" value="Genomic_DNA"/>
</dbReference>
<dbReference type="RefSeq" id="WP_002239977.1">
    <property type="nucleotide sequence ID" value="NC_008767.1"/>
</dbReference>
<dbReference type="SMR" id="A1KVA2"/>
<dbReference type="KEGG" id="nmc:NMC1611"/>
<dbReference type="HOGENOM" id="CLU_023348_4_1_4"/>
<dbReference type="UniPathway" id="UPA00232"/>
<dbReference type="Proteomes" id="UP000002286">
    <property type="component" value="Chromosome"/>
</dbReference>
<dbReference type="GO" id="GO:0005829">
    <property type="term" value="C:cytosol"/>
    <property type="evidence" value="ECO:0007669"/>
    <property type="project" value="TreeGrafter"/>
</dbReference>
<dbReference type="GO" id="GO:0005886">
    <property type="term" value="C:plasma membrane"/>
    <property type="evidence" value="ECO:0007669"/>
    <property type="project" value="UniProtKB-SubCell"/>
</dbReference>
<dbReference type="GO" id="GO:0008694">
    <property type="term" value="F:3-octaprenyl-4-hydroxybenzoate carboxy-lyase activity"/>
    <property type="evidence" value="ECO:0007669"/>
    <property type="project" value="UniProtKB-UniRule"/>
</dbReference>
<dbReference type="GO" id="GO:0046872">
    <property type="term" value="F:metal ion binding"/>
    <property type="evidence" value="ECO:0007669"/>
    <property type="project" value="UniProtKB-KW"/>
</dbReference>
<dbReference type="GO" id="GO:0006744">
    <property type="term" value="P:ubiquinone biosynthetic process"/>
    <property type="evidence" value="ECO:0007669"/>
    <property type="project" value="UniProtKB-UniRule"/>
</dbReference>
<dbReference type="FunFam" id="1.20.5.570:FF:000001">
    <property type="entry name" value="3-octaprenyl-4-hydroxybenzoate carboxy-lyase"/>
    <property type="match status" value="1"/>
</dbReference>
<dbReference type="FunFam" id="3.40.1670.10:FF:000001">
    <property type="entry name" value="3-octaprenyl-4-hydroxybenzoate carboxy-lyase"/>
    <property type="match status" value="1"/>
</dbReference>
<dbReference type="Gene3D" id="1.20.5.570">
    <property type="entry name" value="Single helix bin"/>
    <property type="match status" value="1"/>
</dbReference>
<dbReference type="Gene3D" id="3.40.1670.10">
    <property type="entry name" value="UbiD C-terminal domain-like"/>
    <property type="match status" value="1"/>
</dbReference>
<dbReference type="HAMAP" id="MF_01636">
    <property type="entry name" value="UbiD"/>
    <property type="match status" value="1"/>
</dbReference>
<dbReference type="InterPro" id="IPR002830">
    <property type="entry name" value="UbiD"/>
</dbReference>
<dbReference type="InterPro" id="IPR049381">
    <property type="entry name" value="UbiD-like_C"/>
</dbReference>
<dbReference type="InterPro" id="IPR049383">
    <property type="entry name" value="UbiD-like_N"/>
</dbReference>
<dbReference type="InterPro" id="IPR023677">
    <property type="entry name" value="UbiD_bacteria"/>
</dbReference>
<dbReference type="InterPro" id="IPR048304">
    <property type="entry name" value="UbiD_Rift_dom"/>
</dbReference>
<dbReference type="NCBIfam" id="NF008175">
    <property type="entry name" value="PRK10922.1"/>
    <property type="match status" value="1"/>
</dbReference>
<dbReference type="NCBIfam" id="TIGR00148">
    <property type="entry name" value="UbiD family decarboxylase"/>
    <property type="match status" value="1"/>
</dbReference>
<dbReference type="PANTHER" id="PTHR30108">
    <property type="entry name" value="3-OCTAPRENYL-4-HYDROXYBENZOATE CARBOXY-LYASE-RELATED"/>
    <property type="match status" value="1"/>
</dbReference>
<dbReference type="PANTHER" id="PTHR30108:SF17">
    <property type="entry name" value="FERULIC ACID DECARBOXYLASE 1"/>
    <property type="match status" value="1"/>
</dbReference>
<dbReference type="Pfam" id="PF01977">
    <property type="entry name" value="UbiD"/>
    <property type="match status" value="1"/>
</dbReference>
<dbReference type="Pfam" id="PF20696">
    <property type="entry name" value="UbiD_C"/>
    <property type="match status" value="1"/>
</dbReference>
<dbReference type="Pfam" id="PF20695">
    <property type="entry name" value="UbiD_N"/>
    <property type="match status" value="1"/>
</dbReference>
<dbReference type="SUPFAM" id="SSF50475">
    <property type="entry name" value="FMN-binding split barrel"/>
    <property type="match status" value="1"/>
</dbReference>
<dbReference type="SUPFAM" id="SSF143968">
    <property type="entry name" value="UbiD C-terminal domain-like"/>
    <property type="match status" value="1"/>
</dbReference>
<proteinExistence type="inferred from homology"/>